<gene>
    <name evidence="1" type="primary">rsgA</name>
    <name type="ordered locus">SYNW0026</name>
</gene>
<keyword id="KW-0963">Cytoplasm</keyword>
<keyword id="KW-0342">GTP-binding</keyword>
<keyword id="KW-0378">Hydrolase</keyword>
<keyword id="KW-0479">Metal-binding</keyword>
<keyword id="KW-0547">Nucleotide-binding</keyword>
<keyword id="KW-0690">Ribosome biogenesis</keyword>
<keyword id="KW-0694">RNA-binding</keyword>
<keyword id="KW-0699">rRNA-binding</keyword>
<keyword id="KW-0862">Zinc</keyword>
<comment type="function">
    <text evidence="1">One of several proteins that assist in the late maturation steps of the functional core of the 30S ribosomal subunit. Helps release RbfA from mature subunits. May play a role in the assembly of ribosomal proteins into the subunit. Circularly permuted GTPase that catalyzes slow GTP hydrolysis, GTPase activity is stimulated by the 30S ribosomal subunit.</text>
</comment>
<comment type="cofactor">
    <cofactor evidence="1">
        <name>Zn(2+)</name>
        <dbReference type="ChEBI" id="CHEBI:29105"/>
    </cofactor>
    <text evidence="1">Binds 1 zinc ion per subunit.</text>
</comment>
<comment type="subunit">
    <text evidence="1">Monomer. Associates with 30S ribosomal subunit, binds 16S rRNA.</text>
</comment>
<comment type="subcellular location">
    <subcellularLocation>
        <location evidence="1">Cytoplasm</location>
    </subcellularLocation>
</comment>
<comment type="similarity">
    <text evidence="1">Belongs to the TRAFAC class YlqF/YawG GTPase family. RsgA subfamily.</text>
</comment>
<organism>
    <name type="scientific">Parasynechococcus marenigrum (strain WH8102)</name>
    <dbReference type="NCBI Taxonomy" id="84588"/>
    <lineage>
        <taxon>Bacteria</taxon>
        <taxon>Bacillati</taxon>
        <taxon>Cyanobacteriota</taxon>
        <taxon>Cyanophyceae</taxon>
        <taxon>Synechococcales</taxon>
        <taxon>Prochlorococcaceae</taxon>
        <taxon>Parasynechococcus</taxon>
        <taxon>Parasynechococcus marenigrum</taxon>
    </lineage>
</organism>
<sequence>MSEAVGIVVALQANYLEVELDQAPEQGLSRLLCTRRTRLSHRGETVHVGDRVRVEAIDPVQARAVVSGVEPRCSWLTRPQVANVSLVVVALAVDQPAFDPDQASRFLLTAERTGLPVQLLLTKGDLMEEHQRFALVERLMGWGYDSLVVSSQTGEGVEVLSQRLKDTELAVLCGPSGVGKSSVLNCLMPHLALRVGAVSGRLQRGRHTTRHVELFPIAPGSRVADTPGFNRPDLPDDPSELGMLFPELRVQLSPWPCRFRDCLHRQEPGCGINREWERFEFYKDALQECSDLSRPSRAG</sequence>
<feature type="chain" id="PRO_1000188143" description="Small ribosomal subunit biogenesis GTPase RsgA">
    <location>
        <begin position="1"/>
        <end position="299"/>
    </location>
</feature>
<feature type="domain" description="CP-type G" evidence="2">
    <location>
        <begin position="73"/>
        <end position="232"/>
    </location>
</feature>
<feature type="binding site" evidence="1">
    <location>
        <begin position="122"/>
        <end position="125"/>
    </location>
    <ligand>
        <name>GTP</name>
        <dbReference type="ChEBI" id="CHEBI:37565"/>
    </ligand>
</feature>
<feature type="binding site" evidence="1">
    <location>
        <begin position="174"/>
        <end position="182"/>
    </location>
    <ligand>
        <name>GTP</name>
        <dbReference type="ChEBI" id="CHEBI:37565"/>
    </ligand>
</feature>
<feature type="binding site" evidence="1">
    <location>
        <position position="257"/>
    </location>
    <ligand>
        <name>Zn(2+)</name>
        <dbReference type="ChEBI" id="CHEBI:29105"/>
    </ligand>
</feature>
<feature type="binding site" evidence="1">
    <location>
        <position position="262"/>
    </location>
    <ligand>
        <name>Zn(2+)</name>
        <dbReference type="ChEBI" id="CHEBI:29105"/>
    </ligand>
</feature>
<feature type="binding site" evidence="1">
    <location>
        <position position="264"/>
    </location>
    <ligand>
        <name>Zn(2+)</name>
        <dbReference type="ChEBI" id="CHEBI:29105"/>
    </ligand>
</feature>
<feature type="binding site" evidence="1">
    <location>
        <position position="270"/>
    </location>
    <ligand>
        <name>Zn(2+)</name>
        <dbReference type="ChEBI" id="CHEBI:29105"/>
    </ligand>
</feature>
<proteinExistence type="inferred from homology"/>
<accession>Q7UA74</accession>
<reference key="1">
    <citation type="journal article" date="2003" name="Nature">
        <title>The genome of a motile marine Synechococcus.</title>
        <authorList>
            <person name="Palenik B."/>
            <person name="Brahamsha B."/>
            <person name="Larimer F.W."/>
            <person name="Land M.L."/>
            <person name="Hauser L."/>
            <person name="Chain P."/>
            <person name="Lamerdin J.E."/>
            <person name="Regala W."/>
            <person name="Allen E.E."/>
            <person name="McCarren J."/>
            <person name="Paulsen I.T."/>
            <person name="Dufresne A."/>
            <person name="Partensky F."/>
            <person name="Webb E.A."/>
            <person name="Waterbury J."/>
        </authorList>
    </citation>
    <scope>NUCLEOTIDE SEQUENCE [LARGE SCALE GENOMIC DNA]</scope>
    <source>
        <strain>WH8102</strain>
    </source>
</reference>
<evidence type="ECO:0000255" key="1">
    <source>
        <dbReference type="HAMAP-Rule" id="MF_01820"/>
    </source>
</evidence>
<evidence type="ECO:0000255" key="2">
    <source>
        <dbReference type="PROSITE-ProRule" id="PRU01058"/>
    </source>
</evidence>
<protein>
    <recommendedName>
        <fullName evidence="1">Small ribosomal subunit biogenesis GTPase RsgA</fullName>
        <ecNumber evidence="1">3.6.1.-</ecNumber>
    </recommendedName>
</protein>
<name>RSGA_PARMW</name>
<dbReference type="EC" id="3.6.1.-" evidence="1"/>
<dbReference type="EMBL" id="BX569689">
    <property type="protein sequence ID" value="CAE06541.1"/>
    <property type="molecule type" value="Genomic_DNA"/>
</dbReference>
<dbReference type="RefSeq" id="WP_011126904.1">
    <property type="nucleotide sequence ID" value="NC_005070.1"/>
</dbReference>
<dbReference type="SMR" id="Q7UA74"/>
<dbReference type="STRING" id="84588.SYNW0026"/>
<dbReference type="KEGG" id="syw:SYNW0026"/>
<dbReference type="eggNOG" id="COG1162">
    <property type="taxonomic scope" value="Bacteria"/>
</dbReference>
<dbReference type="HOGENOM" id="CLU_033617_2_1_3"/>
<dbReference type="Proteomes" id="UP000001422">
    <property type="component" value="Chromosome"/>
</dbReference>
<dbReference type="GO" id="GO:0005737">
    <property type="term" value="C:cytoplasm"/>
    <property type="evidence" value="ECO:0007669"/>
    <property type="project" value="UniProtKB-SubCell"/>
</dbReference>
<dbReference type="GO" id="GO:0005525">
    <property type="term" value="F:GTP binding"/>
    <property type="evidence" value="ECO:0007669"/>
    <property type="project" value="UniProtKB-UniRule"/>
</dbReference>
<dbReference type="GO" id="GO:0003924">
    <property type="term" value="F:GTPase activity"/>
    <property type="evidence" value="ECO:0007669"/>
    <property type="project" value="UniProtKB-UniRule"/>
</dbReference>
<dbReference type="GO" id="GO:0046872">
    <property type="term" value="F:metal ion binding"/>
    <property type="evidence" value="ECO:0007669"/>
    <property type="project" value="UniProtKB-KW"/>
</dbReference>
<dbReference type="GO" id="GO:0019843">
    <property type="term" value="F:rRNA binding"/>
    <property type="evidence" value="ECO:0007669"/>
    <property type="project" value="UniProtKB-KW"/>
</dbReference>
<dbReference type="GO" id="GO:0042274">
    <property type="term" value="P:ribosomal small subunit biogenesis"/>
    <property type="evidence" value="ECO:0007669"/>
    <property type="project" value="UniProtKB-UniRule"/>
</dbReference>
<dbReference type="CDD" id="cd01854">
    <property type="entry name" value="YjeQ_EngC"/>
    <property type="match status" value="1"/>
</dbReference>
<dbReference type="Gene3D" id="2.40.50.140">
    <property type="entry name" value="Nucleic acid-binding proteins"/>
    <property type="match status" value="1"/>
</dbReference>
<dbReference type="Gene3D" id="3.40.50.300">
    <property type="entry name" value="P-loop containing nucleotide triphosphate hydrolases"/>
    <property type="match status" value="1"/>
</dbReference>
<dbReference type="Gene3D" id="1.10.40.50">
    <property type="entry name" value="Probable gtpase engc, domain 3"/>
    <property type="match status" value="1"/>
</dbReference>
<dbReference type="HAMAP" id="MF_01820">
    <property type="entry name" value="GTPase_RsgA"/>
    <property type="match status" value="1"/>
</dbReference>
<dbReference type="InterPro" id="IPR030378">
    <property type="entry name" value="G_CP_dom"/>
</dbReference>
<dbReference type="InterPro" id="IPR012340">
    <property type="entry name" value="NA-bd_OB-fold"/>
</dbReference>
<dbReference type="InterPro" id="IPR027417">
    <property type="entry name" value="P-loop_NTPase"/>
</dbReference>
<dbReference type="InterPro" id="IPR004881">
    <property type="entry name" value="Ribosome_biogen_GTPase_RsgA"/>
</dbReference>
<dbReference type="InterPro" id="IPR010914">
    <property type="entry name" value="RsgA_GTPase_dom"/>
</dbReference>
<dbReference type="NCBIfam" id="TIGR00157">
    <property type="entry name" value="ribosome small subunit-dependent GTPase A"/>
    <property type="match status" value="1"/>
</dbReference>
<dbReference type="PANTHER" id="PTHR32120">
    <property type="entry name" value="SMALL RIBOSOMAL SUBUNIT BIOGENESIS GTPASE RSGA"/>
    <property type="match status" value="1"/>
</dbReference>
<dbReference type="PANTHER" id="PTHR32120:SF11">
    <property type="entry name" value="SMALL RIBOSOMAL SUBUNIT BIOGENESIS GTPASE RSGA 1, MITOCHONDRIAL-RELATED"/>
    <property type="match status" value="1"/>
</dbReference>
<dbReference type="Pfam" id="PF03193">
    <property type="entry name" value="RsgA_GTPase"/>
    <property type="match status" value="1"/>
</dbReference>
<dbReference type="SUPFAM" id="SSF50249">
    <property type="entry name" value="Nucleic acid-binding proteins"/>
    <property type="match status" value="1"/>
</dbReference>
<dbReference type="SUPFAM" id="SSF52540">
    <property type="entry name" value="P-loop containing nucleoside triphosphate hydrolases"/>
    <property type="match status" value="1"/>
</dbReference>
<dbReference type="PROSITE" id="PS50936">
    <property type="entry name" value="ENGC_GTPASE"/>
    <property type="match status" value="1"/>
</dbReference>
<dbReference type="PROSITE" id="PS51721">
    <property type="entry name" value="G_CP"/>
    <property type="match status" value="1"/>
</dbReference>